<evidence type="ECO:0000255" key="1">
    <source>
        <dbReference type="HAMAP-Rule" id="MF_00412"/>
    </source>
</evidence>
<comment type="function">
    <text evidence="1">Catalyzes the NADPH-dependent reduction of L-glutamate 5-phosphate into L-glutamate 5-semialdehyde and phosphate. The product spontaneously undergoes cyclization to form 1-pyrroline-5-carboxylate.</text>
</comment>
<comment type="catalytic activity">
    <reaction evidence="1">
        <text>L-glutamate 5-semialdehyde + phosphate + NADP(+) = L-glutamyl 5-phosphate + NADPH + H(+)</text>
        <dbReference type="Rhea" id="RHEA:19541"/>
        <dbReference type="ChEBI" id="CHEBI:15378"/>
        <dbReference type="ChEBI" id="CHEBI:43474"/>
        <dbReference type="ChEBI" id="CHEBI:57783"/>
        <dbReference type="ChEBI" id="CHEBI:58066"/>
        <dbReference type="ChEBI" id="CHEBI:58274"/>
        <dbReference type="ChEBI" id="CHEBI:58349"/>
        <dbReference type="EC" id="1.2.1.41"/>
    </reaction>
</comment>
<comment type="pathway">
    <text evidence="1">Amino-acid biosynthesis; L-proline biosynthesis; L-glutamate 5-semialdehyde from L-glutamate: step 2/2.</text>
</comment>
<comment type="subcellular location">
    <subcellularLocation>
        <location evidence="1">Cytoplasm</location>
    </subcellularLocation>
</comment>
<comment type="similarity">
    <text evidence="1">Belongs to the gamma-glutamyl phosphate reductase family.</text>
</comment>
<feature type="chain" id="PRO_1000193678" description="Gamma-glutamyl phosphate reductase">
    <location>
        <begin position="1"/>
        <end position="425"/>
    </location>
</feature>
<reference key="1">
    <citation type="journal article" date="2010" name="J. Bacteriol.">
        <title>Whole genome sequences of two Xylella fastidiosa strains (M12 and M23) causing almond leaf scorch disease in California.</title>
        <authorList>
            <person name="Chen J."/>
            <person name="Xie G."/>
            <person name="Han S."/>
            <person name="Chertkov O."/>
            <person name="Sims D."/>
            <person name="Civerolo E.L."/>
        </authorList>
    </citation>
    <scope>NUCLEOTIDE SEQUENCE [LARGE SCALE GENOMIC DNA]</scope>
    <source>
        <strain>M23</strain>
    </source>
</reference>
<keyword id="KW-0028">Amino-acid biosynthesis</keyword>
<keyword id="KW-0963">Cytoplasm</keyword>
<keyword id="KW-0521">NADP</keyword>
<keyword id="KW-0560">Oxidoreductase</keyword>
<keyword id="KW-0641">Proline biosynthesis</keyword>
<organism>
    <name type="scientific">Xylella fastidiosa (strain M23)</name>
    <dbReference type="NCBI Taxonomy" id="405441"/>
    <lineage>
        <taxon>Bacteria</taxon>
        <taxon>Pseudomonadati</taxon>
        <taxon>Pseudomonadota</taxon>
        <taxon>Gammaproteobacteria</taxon>
        <taxon>Lysobacterales</taxon>
        <taxon>Lysobacteraceae</taxon>
        <taxon>Xylella</taxon>
    </lineage>
</organism>
<protein>
    <recommendedName>
        <fullName evidence="1">Gamma-glutamyl phosphate reductase</fullName>
        <shortName evidence="1">GPR</shortName>
        <ecNumber evidence="1">1.2.1.41</ecNumber>
    </recommendedName>
    <alternativeName>
        <fullName evidence="1">Glutamate-5-semialdehyde dehydrogenase</fullName>
    </alternativeName>
    <alternativeName>
        <fullName evidence="1">Glutamyl-gamma-semialdehyde dehydrogenase</fullName>
        <shortName evidence="1">GSA dehydrogenase</shortName>
    </alternativeName>
</protein>
<proteinExistence type="inferred from homology"/>
<dbReference type="EC" id="1.2.1.41" evidence="1"/>
<dbReference type="EMBL" id="CP001011">
    <property type="protein sequence ID" value="ACB91740.1"/>
    <property type="molecule type" value="Genomic_DNA"/>
</dbReference>
<dbReference type="RefSeq" id="WP_004087888.1">
    <property type="nucleotide sequence ID" value="NC_010577.1"/>
</dbReference>
<dbReference type="SMR" id="B2I7L2"/>
<dbReference type="KEGG" id="xfn:XfasM23_0291"/>
<dbReference type="HOGENOM" id="CLU_030231_0_0_6"/>
<dbReference type="UniPathway" id="UPA00098">
    <property type="reaction ID" value="UER00360"/>
</dbReference>
<dbReference type="Proteomes" id="UP000001698">
    <property type="component" value="Chromosome"/>
</dbReference>
<dbReference type="GO" id="GO:0005737">
    <property type="term" value="C:cytoplasm"/>
    <property type="evidence" value="ECO:0007669"/>
    <property type="project" value="UniProtKB-SubCell"/>
</dbReference>
<dbReference type="GO" id="GO:0004350">
    <property type="term" value="F:glutamate-5-semialdehyde dehydrogenase activity"/>
    <property type="evidence" value="ECO:0007669"/>
    <property type="project" value="UniProtKB-UniRule"/>
</dbReference>
<dbReference type="GO" id="GO:0050661">
    <property type="term" value="F:NADP binding"/>
    <property type="evidence" value="ECO:0007669"/>
    <property type="project" value="InterPro"/>
</dbReference>
<dbReference type="GO" id="GO:0055129">
    <property type="term" value="P:L-proline biosynthetic process"/>
    <property type="evidence" value="ECO:0007669"/>
    <property type="project" value="UniProtKB-UniRule"/>
</dbReference>
<dbReference type="CDD" id="cd07079">
    <property type="entry name" value="ALDH_F18-19_ProA-GPR"/>
    <property type="match status" value="1"/>
</dbReference>
<dbReference type="FunFam" id="3.40.309.10:FF:000006">
    <property type="entry name" value="Gamma-glutamyl phosphate reductase"/>
    <property type="match status" value="1"/>
</dbReference>
<dbReference type="Gene3D" id="3.40.605.10">
    <property type="entry name" value="Aldehyde Dehydrogenase, Chain A, domain 1"/>
    <property type="match status" value="1"/>
</dbReference>
<dbReference type="Gene3D" id="3.40.309.10">
    <property type="entry name" value="Aldehyde Dehydrogenase, Chain A, domain 2"/>
    <property type="match status" value="1"/>
</dbReference>
<dbReference type="HAMAP" id="MF_00412">
    <property type="entry name" value="ProA"/>
    <property type="match status" value="1"/>
</dbReference>
<dbReference type="InterPro" id="IPR016161">
    <property type="entry name" value="Ald_DH/histidinol_DH"/>
</dbReference>
<dbReference type="InterPro" id="IPR016163">
    <property type="entry name" value="Ald_DH_C"/>
</dbReference>
<dbReference type="InterPro" id="IPR016162">
    <property type="entry name" value="Ald_DH_N"/>
</dbReference>
<dbReference type="InterPro" id="IPR015590">
    <property type="entry name" value="Aldehyde_DH_dom"/>
</dbReference>
<dbReference type="InterPro" id="IPR020593">
    <property type="entry name" value="G-glutamylP_reductase_CS"/>
</dbReference>
<dbReference type="InterPro" id="IPR012134">
    <property type="entry name" value="Glu-5-SA_DH"/>
</dbReference>
<dbReference type="InterPro" id="IPR000965">
    <property type="entry name" value="GPR_dom"/>
</dbReference>
<dbReference type="NCBIfam" id="NF001221">
    <property type="entry name" value="PRK00197.1"/>
    <property type="match status" value="1"/>
</dbReference>
<dbReference type="NCBIfam" id="TIGR00407">
    <property type="entry name" value="proA"/>
    <property type="match status" value="1"/>
</dbReference>
<dbReference type="PANTHER" id="PTHR11063:SF8">
    <property type="entry name" value="DELTA-1-PYRROLINE-5-CARBOXYLATE SYNTHASE"/>
    <property type="match status" value="1"/>
</dbReference>
<dbReference type="PANTHER" id="PTHR11063">
    <property type="entry name" value="GLUTAMATE SEMIALDEHYDE DEHYDROGENASE"/>
    <property type="match status" value="1"/>
</dbReference>
<dbReference type="Pfam" id="PF00171">
    <property type="entry name" value="Aldedh"/>
    <property type="match status" value="1"/>
</dbReference>
<dbReference type="PIRSF" id="PIRSF000151">
    <property type="entry name" value="GPR"/>
    <property type="match status" value="1"/>
</dbReference>
<dbReference type="SUPFAM" id="SSF53720">
    <property type="entry name" value="ALDH-like"/>
    <property type="match status" value="1"/>
</dbReference>
<dbReference type="PROSITE" id="PS01223">
    <property type="entry name" value="PROA"/>
    <property type="match status" value="1"/>
</dbReference>
<name>PROA_XYLF2</name>
<accession>B2I7L2</accession>
<gene>
    <name evidence="1" type="primary">proA</name>
    <name type="ordered locus">XfasM23_0291</name>
</gene>
<sequence length="425" mass="45650">MSHIRHLAQQCRDAARILATLSTDAKRRLLETMATALNTDAATILAANAADLDAARTQQVGTAMLDRLALDPQRLAAMADALRDIAALPDPVGQVTRDDRRPNGIHIQKIRVPLGVIAMIYEARPNVTADAAALCIKAGNGIILRGGSEAIRSNIAIATALQRALRLASLPETALILVQDMARHTMLELLQLSDLIDLVIPRGGEGLIRFVAEHARIPVIKHYKGVCHQFVDASADIEMAIRLLIDGKTTRPAACNALETLLVHTDIAPRFLPAAAAALRPYGVQLRGDHATCTLLPDVLLATDADYAAEYLDLILAIRIVPNLDAALEHIRRYGSDHTEVIVTADPAHADTFVQQLPSAVVMVNASSRFSDGGALGLGAEIGISTTRLHAYGPMGLDALTVERFVVRGQGQVRHCPPYPPAPRR</sequence>